<organism>
    <name type="scientific">Mycobacterium bovis (strain ATCC BAA-935 / AF2122/97)</name>
    <dbReference type="NCBI Taxonomy" id="233413"/>
    <lineage>
        <taxon>Bacteria</taxon>
        <taxon>Bacillati</taxon>
        <taxon>Actinomycetota</taxon>
        <taxon>Actinomycetes</taxon>
        <taxon>Mycobacteriales</taxon>
        <taxon>Mycobacteriaceae</taxon>
        <taxon>Mycobacterium</taxon>
        <taxon>Mycobacterium tuberculosis complex</taxon>
    </lineage>
</organism>
<reference key="1">
    <citation type="journal article" date="2003" name="Proc. Natl. Acad. Sci. U.S.A.">
        <title>The complete genome sequence of Mycobacterium bovis.</title>
        <authorList>
            <person name="Garnier T."/>
            <person name="Eiglmeier K."/>
            <person name="Camus J.-C."/>
            <person name="Medina N."/>
            <person name="Mansoor H."/>
            <person name="Pryor M."/>
            <person name="Duthoy S."/>
            <person name="Grondin S."/>
            <person name="Lacroix C."/>
            <person name="Monsempe C."/>
            <person name="Simon S."/>
            <person name="Harris B."/>
            <person name="Atkin R."/>
            <person name="Doggett J."/>
            <person name="Mayes R."/>
            <person name="Keating L."/>
            <person name="Wheeler P.R."/>
            <person name="Parkhill J."/>
            <person name="Barrell B.G."/>
            <person name="Cole S.T."/>
            <person name="Gordon S.V."/>
            <person name="Hewinson R.G."/>
        </authorList>
    </citation>
    <scope>NUCLEOTIDE SEQUENCE [LARGE SCALE GENOMIC DNA]</scope>
    <source>
        <strain>ATCC BAA-935 / AF2122/97</strain>
    </source>
</reference>
<reference key="2">
    <citation type="journal article" date="2017" name="Genome Announc.">
        <title>Updated reference genome sequence and annotation of Mycobacterium bovis AF2122/97.</title>
        <authorList>
            <person name="Malone K.M."/>
            <person name="Farrell D."/>
            <person name="Stuber T.P."/>
            <person name="Schubert O.T."/>
            <person name="Aebersold R."/>
            <person name="Robbe-Austerman S."/>
            <person name="Gordon S.V."/>
        </authorList>
    </citation>
    <scope>NUCLEOTIDE SEQUENCE [LARGE SCALE GENOMIC DNA]</scope>
    <scope>GENOME REANNOTATION</scope>
    <source>
        <strain>ATCC BAA-935 / AF2122/97</strain>
    </source>
</reference>
<comment type="catalytic activity">
    <reaction>
        <text>L-seryl-[protein] + ATP = O-phospho-L-seryl-[protein] + ADP + H(+)</text>
        <dbReference type="Rhea" id="RHEA:17989"/>
        <dbReference type="Rhea" id="RHEA-COMP:9863"/>
        <dbReference type="Rhea" id="RHEA-COMP:11604"/>
        <dbReference type="ChEBI" id="CHEBI:15378"/>
        <dbReference type="ChEBI" id="CHEBI:29999"/>
        <dbReference type="ChEBI" id="CHEBI:30616"/>
        <dbReference type="ChEBI" id="CHEBI:83421"/>
        <dbReference type="ChEBI" id="CHEBI:456216"/>
        <dbReference type="EC" id="2.7.11.1"/>
    </reaction>
</comment>
<comment type="catalytic activity">
    <reaction>
        <text>L-threonyl-[protein] + ATP = O-phospho-L-threonyl-[protein] + ADP + H(+)</text>
        <dbReference type="Rhea" id="RHEA:46608"/>
        <dbReference type="Rhea" id="RHEA-COMP:11060"/>
        <dbReference type="Rhea" id="RHEA-COMP:11605"/>
        <dbReference type="ChEBI" id="CHEBI:15378"/>
        <dbReference type="ChEBI" id="CHEBI:30013"/>
        <dbReference type="ChEBI" id="CHEBI:30616"/>
        <dbReference type="ChEBI" id="CHEBI:61977"/>
        <dbReference type="ChEBI" id="CHEBI:456216"/>
        <dbReference type="EC" id="2.7.11.1"/>
    </reaction>
</comment>
<comment type="subcellular location">
    <subcellularLocation>
        <location evidence="1">Cell membrane</location>
        <topology evidence="1">Single-pass membrane protein</topology>
    </subcellularLocation>
</comment>
<comment type="PTM">
    <text evidence="1">Autophosphorylated on threonine and serine residues.</text>
</comment>
<comment type="similarity">
    <text evidence="3">Belongs to the protein kinase superfamily. Ser/Thr protein kinase family.</text>
</comment>
<proteinExistence type="inferred from homology"/>
<protein>
    <recommendedName>
        <fullName>Serine/threonine-protein kinase PknH</fullName>
        <ecNumber>2.7.11.1</ecNumber>
    </recommendedName>
</protein>
<keyword id="KW-0067">ATP-binding</keyword>
<keyword id="KW-1003">Cell membrane</keyword>
<keyword id="KW-0418">Kinase</keyword>
<keyword id="KW-0472">Membrane</keyword>
<keyword id="KW-0547">Nucleotide-binding</keyword>
<keyword id="KW-0597">Phosphoprotein</keyword>
<keyword id="KW-1185">Reference proteome</keyword>
<keyword id="KW-0723">Serine/threonine-protein kinase</keyword>
<keyword id="KW-0808">Transferase</keyword>
<keyword id="KW-0812">Transmembrane</keyword>
<keyword id="KW-1133">Transmembrane helix</keyword>
<accession>Q7U095</accession>
<accession>A0A1R3XXU3</accession>
<accession>X2BH99</accession>
<name>PKNH_MYCBO</name>
<dbReference type="EC" id="2.7.11.1"/>
<dbReference type="EMBL" id="LT708304">
    <property type="protein sequence ID" value="SIT99898.1"/>
    <property type="molecule type" value="Genomic_DNA"/>
</dbReference>
<dbReference type="RefSeq" id="NP_854951.1">
    <property type="nucleotide sequence ID" value="NC_002945.3"/>
</dbReference>
<dbReference type="RefSeq" id="WP_010950514.1">
    <property type="nucleotide sequence ID" value="NC_002945.4"/>
</dbReference>
<dbReference type="SMR" id="Q7U095"/>
<dbReference type="KEGG" id="mbo:BQ2027_MB1297C"/>
<dbReference type="PATRIC" id="fig|233413.5.peg.1422"/>
<dbReference type="Proteomes" id="UP000001419">
    <property type="component" value="Chromosome"/>
</dbReference>
<dbReference type="GO" id="GO:0005886">
    <property type="term" value="C:plasma membrane"/>
    <property type="evidence" value="ECO:0007669"/>
    <property type="project" value="UniProtKB-SubCell"/>
</dbReference>
<dbReference type="GO" id="GO:0005524">
    <property type="term" value="F:ATP binding"/>
    <property type="evidence" value="ECO:0007669"/>
    <property type="project" value="UniProtKB-KW"/>
</dbReference>
<dbReference type="GO" id="GO:0106310">
    <property type="term" value="F:protein serine kinase activity"/>
    <property type="evidence" value="ECO:0007669"/>
    <property type="project" value="RHEA"/>
</dbReference>
<dbReference type="GO" id="GO:0004674">
    <property type="term" value="F:protein serine/threonine kinase activity"/>
    <property type="evidence" value="ECO:0007669"/>
    <property type="project" value="UniProtKB-KW"/>
</dbReference>
<dbReference type="GO" id="GO:0080090">
    <property type="term" value="P:regulation of primary metabolic process"/>
    <property type="evidence" value="ECO:0007669"/>
    <property type="project" value="UniProtKB-ARBA"/>
</dbReference>
<dbReference type="CDD" id="cd14014">
    <property type="entry name" value="STKc_PknB_like"/>
    <property type="match status" value="1"/>
</dbReference>
<dbReference type="FunFam" id="1.10.510.10:FF:000021">
    <property type="entry name" value="Serine/threonine protein kinase"/>
    <property type="match status" value="1"/>
</dbReference>
<dbReference type="FunFam" id="3.30.200.20:FF:000348">
    <property type="entry name" value="Serine/threonine protein kinase"/>
    <property type="match status" value="1"/>
</dbReference>
<dbReference type="Gene3D" id="3.30.200.20">
    <property type="entry name" value="Phosphorylase Kinase, domain 1"/>
    <property type="match status" value="1"/>
</dbReference>
<dbReference type="Gene3D" id="3.40.1000.70">
    <property type="entry name" value="PknH-like extracellular domain"/>
    <property type="match status" value="1"/>
</dbReference>
<dbReference type="Gene3D" id="1.10.510.10">
    <property type="entry name" value="Transferase(Phosphotransferase) domain 1"/>
    <property type="match status" value="1"/>
</dbReference>
<dbReference type="InterPro" id="IPR011009">
    <property type="entry name" value="Kinase-like_dom_sf"/>
</dbReference>
<dbReference type="InterPro" id="IPR026954">
    <property type="entry name" value="PknH-like_Extracell"/>
</dbReference>
<dbReference type="InterPro" id="IPR038232">
    <property type="entry name" value="PknH-like_Extracell_sf"/>
</dbReference>
<dbReference type="InterPro" id="IPR000719">
    <property type="entry name" value="Prot_kinase_dom"/>
</dbReference>
<dbReference type="InterPro" id="IPR017441">
    <property type="entry name" value="Protein_kinase_ATP_BS"/>
</dbReference>
<dbReference type="InterPro" id="IPR008271">
    <property type="entry name" value="Ser/Thr_kinase_AS"/>
</dbReference>
<dbReference type="PANTHER" id="PTHR43289">
    <property type="entry name" value="MITOGEN-ACTIVATED PROTEIN KINASE KINASE KINASE 20-RELATED"/>
    <property type="match status" value="1"/>
</dbReference>
<dbReference type="PANTHER" id="PTHR43289:SF6">
    <property type="entry name" value="SERINE_THREONINE-PROTEIN KINASE NEKL-3"/>
    <property type="match status" value="1"/>
</dbReference>
<dbReference type="Pfam" id="PF00069">
    <property type="entry name" value="Pkinase"/>
    <property type="match status" value="1"/>
</dbReference>
<dbReference type="Pfam" id="PF14032">
    <property type="entry name" value="PknH_C"/>
    <property type="match status" value="1"/>
</dbReference>
<dbReference type="SMART" id="SM00220">
    <property type="entry name" value="S_TKc"/>
    <property type="match status" value="1"/>
</dbReference>
<dbReference type="SUPFAM" id="SSF56112">
    <property type="entry name" value="Protein kinase-like (PK-like)"/>
    <property type="match status" value="1"/>
</dbReference>
<dbReference type="PROSITE" id="PS00107">
    <property type="entry name" value="PROTEIN_KINASE_ATP"/>
    <property type="match status" value="1"/>
</dbReference>
<dbReference type="PROSITE" id="PS50011">
    <property type="entry name" value="PROTEIN_KINASE_DOM"/>
    <property type="match status" value="1"/>
</dbReference>
<dbReference type="PROSITE" id="PS00108">
    <property type="entry name" value="PROTEIN_KINASE_ST"/>
    <property type="match status" value="1"/>
</dbReference>
<gene>
    <name type="primary">pknH</name>
    <name type="ordered locus">BQ2027_MB1297C</name>
</gene>
<sequence length="596" mass="63697">MSDAQDSRVGSMFGPYHLKRLLGRGGMGEVYEAEHTVKEWTVAVKLMTAEFSKDPVFRERMKREARIAGRLQEPHVVPIHDYGEVDGQMFLEMRLVEGTDLDSVLKRFGPLTPPRAVAIITQIASALDAAHADGVMHRDVKPQNILITRDDFAYLVDFGIASATTDEKLTQLGTAVGTWKYMAPERFSNDEVTYRADIYALACVLHECLTGAPPYRADSAGTLVSSHLMGPIPQPSAIRPGIPKAFDAVVARGMAKKPEDRYASAGDLALAAHEALSDPDQDHAADILRRSQESTLPGTAAVTAQPPTMPTVTPPPIQAAPTGQPSWAPNSGPMPASGPTPTPQYYQGGGWGAPPSGGPSPWAQTPRKTNPWPLVAGAAAVVLVLVLGAIGIWIANRPKPVQPPQPVAEERLSALLLNSSEVNAVMGSSSMQPGKPITSMDSSPVTVSLPDCQGALYTSQDPVYAGTGYTAINGLISSEPGDNYEHWVNQAVVAFPTADKARAFVQTSADKWKNCAGKTVTVTNKAKTYRWTFADVKGSPPTITVIDTQEGAEGWECQRAMSVANNVVVDVNACGYQITNQAGQIAAKIVDKVNKE</sequence>
<evidence type="ECO:0000250" key="1"/>
<evidence type="ECO:0000255" key="2"/>
<evidence type="ECO:0000255" key="3">
    <source>
        <dbReference type="PROSITE-ProRule" id="PRU00159"/>
    </source>
</evidence>
<evidence type="ECO:0000255" key="4">
    <source>
        <dbReference type="PROSITE-ProRule" id="PRU10027"/>
    </source>
</evidence>
<evidence type="ECO:0000256" key="5">
    <source>
        <dbReference type="SAM" id="MobiDB-lite"/>
    </source>
</evidence>
<feature type="chain" id="PRO_0000171217" description="Serine/threonine-protein kinase PknH">
    <location>
        <begin position="1"/>
        <end position="596"/>
    </location>
</feature>
<feature type="topological domain" description="Cytoplasmic" evidence="2">
    <location>
        <begin position="1"/>
        <end position="373"/>
    </location>
</feature>
<feature type="transmembrane region" description="Helical" evidence="2">
    <location>
        <begin position="374"/>
        <end position="394"/>
    </location>
</feature>
<feature type="topological domain" description="Extracellular" evidence="2">
    <location>
        <begin position="395"/>
        <end position="596"/>
    </location>
</feature>
<feature type="domain" description="Protein kinase" evidence="3">
    <location>
        <begin position="16"/>
        <end position="276"/>
    </location>
</feature>
<feature type="region of interest" description="Disordered" evidence="5">
    <location>
        <begin position="292"/>
        <end position="368"/>
    </location>
</feature>
<feature type="compositionally biased region" description="Pro residues" evidence="5">
    <location>
        <begin position="307"/>
        <end position="318"/>
    </location>
</feature>
<feature type="active site" description="Proton acceptor" evidence="3 4">
    <location>
        <position position="139"/>
    </location>
</feature>
<feature type="binding site" evidence="3">
    <location>
        <begin position="22"/>
        <end position="30"/>
    </location>
    <ligand>
        <name>ATP</name>
        <dbReference type="ChEBI" id="CHEBI:30616"/>
    </ligand>
</feature>
<feature type="binding site" evidence="3">
    <location>
        <position position="45"/>
    </location>
    <ligand>
        <name>ATP</name>
        <dbReference type="ChEBI" id="CHEBI:30616"/>
    </ligand>
</feature>
<feature type="modified residue" description="Phosphothreonine" evidence="1">
    <location>
        <position position="170"/>
    </location>
</feature>